<comment type="function">
    <text evidence="1">Associates with proteins harboring glycine-rich transmembrane domains and ensures their efficient localization to the cell surface.</text>
</comment>
<comment type="subcellular location">
    <subcellularLocation>
        <location evidence="2">Membrane</location>
        <topology evidence="2">Multi-pass membrane protein</topology>
    </subcellularLocation>
    <subcellularLocation>
        <location evidence="1">Golgi apparatus</location>
    </subcellularLocation>
    <subcellularLocation>
        <location evidence="1">Early endosome</location>
    </subcellularLocation>
</comment>
<comment type="similarity">
    <text evidence="3">Belongs to the nonaspanin (TM9SF) (TC 9.A.2) family.</text>
</comment>
<evidence type="ECO:0000250" key="1">
    <source>
        <dbReference type="UniProtKB" id="Q92544"/>
    </source>
</evidence>
<evidence type="ECO:0000255" key="2"/>
<evidence type="ECO:0000305" key="3"/>
<protein>
    <recommendedName>
        <fullName>Transmembrane 9 superfamily member 4</fullName>
    </recommendedName>
</protein>
<sequence length="643" mass="74675">MAAAMIWWPRFLLLLCLTCKGSTFYVPGVAPINFHQNDPVEIKAVKLTSSRTQLPYEYYSLPFCQPNKITYKAENLGEVLRGDRIVNTPFQVLMNSEKKCEVLCGQSNKPVILTVEQSRLVAERITEEYYVHLIADNLPVATRLELYSSNRDSDDKKKEKDVQFEHGYRLGFTDVNKIYLHNHLSFILYYHREDTEEDQEHTYRVVRFEVIPQSIRLEDLKIDEKSSCTLPEGANSLPQEIDPTKENQLYFTYSVHWEESDIKWASRWDTYLTMSDVQIHWFSIINSVVVVFFLSGILSMIIIRTLRKDIANYNKEDDIEDTMEESGWKLVHGDVFRPPQYPMILSSLLGSGIQLFCMILIVIFVAMLGMLSPSSRGALMTTACFLFMFMGVFGGFSAGRLYRTLKGHRWKKGAFCTATLYPGVVFGICFVLNCFIWGKHSSGAVPFPTMVALLCMWFGISLPLVYLGYYFGFRKQPYDNPVRTNQIPRQIPEQRWYMNRFVGILMAGILPFGAMFIELFFIFSAIWENQFYYLFGFLFLVFIILVVSCSQISIVMVYFQLCAEDYRWWWRNFLVSGGSAFYVLVYAIFYFVNKLDIVEFIPSLLYFGYTTLMVLSFWLLTGTIGFYAAYMFVRKIYAAVKID</sequence>
<keyword id="KW-0967">Endosome</keyword>
<keyword id="KW-0333">Golgi apparatus</keyword>
<keyword id="KW-0472">Membrane</keyword>
<keyword id="KW-0597">Phosphoprotein</keyword>
<keyword id="KW-1185">Reference proteome</keyword>
<keyword id="KW-0732">Signal</keyword>
<keyword id="KW-0812">Transmembrane</keyword>
<keyword id="KW-1133">Transmembrane helix</keyword>
<reference key="1">
    <citation type="journal article" date="2004" name="Genome Res.">
        <title>The status, quality, and expansion of the NIH full-length cDNA project: the Mammalian Gene Collection (MGC).</title>
        <authorList>
            <consortium name="The MGC Project Team"/>
        </authorList>
    </citation>
    <scope>NUCLEOTIDE SEQUENCE [LARGE SCALE MRNA]</scope>
    <source>
        <tissue>Testis</tissue>
    </source>
</reference>
<proteinExistence type="evidence at transcript level"/>
<gene>
    <name type="primary">Tm9sf4</name>
</gene>
<feature type="signal peptide" evidence="2">
    <location>
        <begin position="1"/>
        <end position="23"/>
    </location>
</feature>
<feature type="chain" id="PRO_0000311812" description="Transmembrane 9 superfamily member 4">
    <location>
        <begin position="24"/>
        <end position="643"/>
    </location>
</feature>
<feature type="topological domain" description="Extracellular" evidence="2">
    <location>
        <begin position="24"/>
        <end position="282"/>
    </location>
</feature>
<feature type="transmembrane region" description="Helical" evidence="2">
    <location>
        <begin position="283"/>
        <end position="303"/>
    </location>
</feature>
<feature type="topological domain" description="Cytoplasmic" evidence="2">
    <location>
        <begin position="304"/>
        <end position="347"/>
    </location>
</feature>
<feature type="transmembrane region" description="Helical" evidence="2">
    <location>
        <begin position="348"/>
        <end position="368"/>
    </location>
</feature>
<feature type="topological domain" description="Extracellular" evidence="2">
    <location>
        <begin position="369"/>
        <end position="377"/>
    </location>
</feature>
<feature type="transmembrane region" description="Helical" evidence="2">
    <location>
        <begin position="378"/>
        <end position="398"/>
    </location>
</feature>
<feature type="topological domain" description="Cytoplasmic" evidence="2">
    <location>
        <begin position="399"/>
        <end position="417"/>
    </location>
</feature>
<feature type="transmembrane region" description="Helical" evidence="2">
    <location>
        <begin position="418"/>
        <end position="438"/>
    </location>
</feature>
<feature type="topological domain" description="Extracellular" evidence="2">
    <location>
        <begin position="439"/>
        <end position="450"/>
    </location>
</feature>
<feature type="transmembrane region" description="Helical" evidence="2">
    <location>
        <begin position="451"/>
        <end position="471"/>
    </location>
</feature>
<feature type="topological domain" description="Cytoplasmic" evidence="2">
    <location>
        <begin position="472"/>
        <end position="502"/>
    </location>
</feature>
<feature type="transmembrane region" description="Helical" evidence="2">
    <location>
        <begin position="503"/>
        <end position="523"/>
    </location>
</feature>
<feature type="topological domain" description="Extracellular" evidence="2">
    <location>
        <begin position="524"/>
        <end position="536"/>
    </location>
</feature>
<feature type="transmembrane region" description="Helical" evidence="2">
    <location>
        <begin position="537"/>
        <end position="557"/>
    </location>
</feature>
<feature type="topological domain" description="Cytoplasmic" evidence="2">
    <location>
        <begin position="558"/>
        <end position="571"/>
    </location>
</feature>
<feature type="transmembrane region" description="Helical" evidence="2">
    <location>
        <begin position="572"/>
        <end position="592"/>
    </location>
</feature>
<feature type="topological domain" description="Extracellular" evidence="2">
    <location>
        <begin position="593"/>
        <end position="599"/>
    </location>
</feature>
<feature type="transmembrane region" description="Helical" evidence="2">
    <location>
        <begin position="600"/>
        <end position="620"/>
    </location>
</feature>
<feature type="topological domain" description="Cytoplasmic" evidence="2">
    <location>
        <begin position="621"/>
        <end position="643"/>
    </location>
</feature>
<feature type="modified residue" description="Phosphotyrosine" evidence="1">
    <location>
        <position position="313"/>
    </location>
</feature>
<name>TM9S4_RAT</name>
<accession>Q4KLL4</accession>
<organism>
    <name type="scientific">Rattus norvegicus</name>
    <name type="common">Rat</name>
    <dbReference type="NCBI Taxonomy" id="10116"/>
    <lineage>
        <taxon>Eukaryota</taxon>
        <taxon>Metazoa</taxon>
        <taxon>Chordata</taxon>
        <taxon>Craniata</taxon>
        <taxon>Vertebrata</taxon>
        <taxon>Euteleostomi</taxon>
        <taxon>Mammalia</taxon>
        <taxon>Eutheria</taxon>
        <taxon>Euarchontoglires</taxon>
        <taxon>Glires</taxon>
        <taxon>Rodentia</taxon>
        <taxon>Myomorpha</taxon>
        <taxon>Muroidea</taxon>
        <taxon>Muridae</taxon>
        <taxon>Murinae</taxon>
        <taxon>Rattus</taxon>
    </lineage>
</organism>
<dbReference type="EMBL" id="BC099133">
    <property type="protein sequence ID" value="AAH99133.1"/>
    <property type="molecule type" value="mRNA"/>
</dbReference>
<dbReference type="RefSeq" id="NP_001020820.1">
    <property type="nucleotide sequence ID" value="NM_001025649.1"/>
</dbReference>
<dbReference type="SMR" id="Q4KLL4"/>
<dbReference type="FunCoup" id="Q4KLL4">
    <property type="interactions" value="4168"/>
</dbReference>
<dbReference type="IntAct" id="Q4KLL4">
    <property type="interactions" value="1"/>
</dbReference>
<dbReference type="STRING" id="10116.ENSRNOP00000062975"/>
<dbReference type="PhosphoSitePlus" id="Q4KLL4"/>
<dbReference type="SwissPalm" id="Q4KLL4"/>
<dbReference type="jPOST" id="Q4KLL4"/>
<dbReference type="PaxDb" id="10116-ENSRNOP00000062975"/>
<dbReference type="Ensembl" id="ENSRNOT00000081370.2">
    <property type="protein sequence ID" value="ENSRNOP00000075230.2"/>
    <property type="gene ID" value="ENSRNOG00000009406.8"/>
</dbReference>
<dbReference type="GeneID" id="296279"/>
<dbReference type="KEGG" id="rno:296279"/>
<dbReference type="UCSC" id="RGD:1307768">
    <property type="organism name" value="rat"/>
</dbReference>
<dbReference type="AGR" id="RGD:1307768"/>
<dbReference type="CTD" id="9777"/>
<dbReference type="RGD" id="1307768">
    <property type="gene designation" value="Tm9sf4"/>
</dbReference>
<dbReference type="eggNOG" id="KOG1278">
    <property type="taxonomic scope" value="Eukaryota"/>
</dbReference>
<dbReference type="GeneTree" id="ENSGT00940000157198"/>
<dbReference type="HOGENOM" id="CLU_010714_4_1_1"/>
<dbReference type="InParanoid" id="Q4KLL4"/>
<dbReference type="PhylomeDB" id="Q4KLL4"/>
<dbReference type="TreeFam" id="TF354239"/>
<dbReference type="PRO" id="PR:Q4KLL4"/>
<dbReference type="Proteomes" id="UP000002494">
    <property type="component" value="Chromosome 3"/>
</dbReference>
<dbReference type="Bgee" id="ENSRNOG00000009406">
    <property type="expression patterns" value="Expressed in liver and 19 other cell types or tissues"/>
</dbReference>
<dbReference type="ExpressionAtlas" id="Q4KLL4">
    <property type="expression patterns" value="baseline and differential"/>
</dbReference>
<dbReference type="GO" id="GO:0005769">
    <property type="term" value="C:early endosome"/>
    <property type="evidence" value="ECO:0000250"/>
    <property type="project" value="UniProtKB"/>
</dbReference>
<dbReference type="GO" id="GO:0005794">
    <property type="term" value="C:Golgi apparatus"/>
    <property type="evidence" value="ECO:0000250"/>
    <property type="project" value="UniProtKB"/>
</dbReference>
<dbReference type="GO" id="GO:0016020">
    <property type="term" value="C:membrane"/>
    <property type="evidence" value="ECO:0000318"/>
    <property type="project" value="GO_Central"/>
</dbReference>
<dbReference type="GO" id="GO:0007155">
    <property type="term" value="P:cell adhesion"/>
    <property type="evidence" value="ECO:0000266"/>
    <property type="project" value="RGD"/>
</dbReference>
<dbReference type="GO" id="GO:0006909">
    <property type="term" value="P:phagocytosis"/>
    <property type="evidence" value="ECO:0000266"/>
    <property type="project" value="RGD"/>
</dbReference>
<dbReference type="GO" id="GO:0070863">
    <property type="term" value="P:positive regulation of protein exit from endoplasmic reticulum"/>
    <property type="evidence" value="ECO:0000250"/>
    <property type="project" value="UniProtKB"/>
</dbReference>
<dbReference type="GO" id="GO:2000010">
    <property type="term" value="P:positive regulation of protein localization to cell surface"/>
    <property type="evidence" value="ECO:0000250"/>
    <property type="project" value="UniProtKB"/>
</dbReference>
<dbReference type="GO" id="GO:0072657">
    <property type="term" value="P:protein localization to membrane"/>
    <property type="evidence" value="ECO:0000318"/>
    <property type="project" value="GO_Central"/>
</dbReference>
<dbReference type="GO" id="GO:0051453">
    <property type="term" value="P:regulation of intracellular pH"/>
    <property type="evidence" value="ECO:0000266"/>
    <property type="project" value="RGD"/>
</dbReference>
<dbReference type="GO" id="GO:0001666">
    <property type="term" value="P:response to hypoxia"/>
    <property type="evidence" value="ECO:0000266"/>
    <property type="project" value="RGD"/>
</dbReference>
<dbReference type="GO" id="GO:0070072">
    <property type="term" value="P:vacuolar proton-transporting V-type ATPase complex assembly"/>
    <property type="evidence" value="ECO:0000266"/>
    <property type="project" value="RGD"/>
</dbReference>
<dbReference type="InterPro" id="IPR004240">
    <property type="entry name" value="EMP70"/>
</dbReference>
<dbReference type="PANTHER" id="PTHR10766:SF55">
    <property type="entry name" value="TRANSMEMBRANE 9 SUPERFAMILY MEMBER 4"/>
    <property type="match status" value="1"/>
</dbReference>
<dbReference type="PANTHER" id="PTHR10766">
    <property type="entry name" value="TRANSMEMBRANE 9 SUPERFAMILY PROTEIN"/>
    <property type="match status" value="1"/>
</dbReference>
<dbReference type="Pfam" id="PF02990">
    <property type="entry name" value="EMP70"/>
    <property type="match status" value="1"/>
</dbReference>